<feature type="chain" id="PRO_1000019332" description="Ferrochelatase">
    <location>
        <begin position="1"/>
        <end position="350"/>
    </location>
</feature>
<feature type="binding site" evidence="1">
    <location>
        <position position="220"/>
    </location>
    <ligand>
        <name>Fe cation</name>
        <dbReference type="ChEBI" id="CHEBI:24875"/>
    </ligand>
</feature>
<feature type="binding site" evidence="1">
    <location>
        <position position="301"/>
    </location>
    <ligand>
        <name>Fe cation</name>
        <dbReference type="ChEBI" id="CHEBI:24875"/>
    </ligand>
</feature>
<reference key="1">
    <citation type="journal article" date="2011" name="J. Bacteriol.">
        <title>Genome of Ochrobactrum anthropi ATCC 49188 T, a versatile opportunistic pathogen and symbiont of several eukaryotic hosts.</title>
        <authorList>
            <person name="Chain P.S."/>
            <person name="Lang D.M."/>
            <person name="Comerci D.J."/>
            <person name="Malfatti S.A."/>
            <person name="Vergez L.M."/>
            <person name="Shin M."/>
            <person name="Ugalde R.A."/>
            <person name="Garcia E."/>
            <person name="Tolmasky M.E."/>
        </authorList>
    </citation>
    <scope>NUCLEOTIDE SEQUENCE [LARGE SCALE GENOMIC DNA]</scope>
    <source>
        <strain>ATCC 49188 / DSM 6882 / CCUG 24695 / JCM 21032 / LMG 3331 / NBRC 15819 / NCTC 12168 / Alc 37</strain>
    </source>
</reference>
<protein>
    <recommendedName>
        <fullName evidence="1">Ferrochelatase</fullName>
        <ecNumber evidence="1">4.98.1.1</ecNumber>
    </recommendedName>
    <alternativeName>
        <fullName evidence="1">Heme synthase</fullName>
    </alternativeName>
    <alternativeName>
        <fullName evidence="1">Protoheme ferro-lyase</fullName>
    </alternativeName>
</protein>
<comment type="function">
    <text evidence="1">Catalyzes the ferrous insertion into protoporphyrin IX.</text>
</comment>
<comment type="catalytic activity">
    <reaction evidence="1">
        <text>heme b + 2 H(+) = protoporphyrin IX + Fe(2+)</text>
        <dbReference type="Rhea" id="RHEA:22584"/>
        <dbReference type="ChEBI" id="CHEBI:15378"/>
        <dbReference type="ChEBI" id="CHEBI:29033"/>
        <dbReference type="ChEBI" id="CHEBI:57306"/>
        <dbReference type="ChEBI" id="CHEBI:60344"/>
        <dbReference type="EC" id="4.98.1.1"/>
    </reaction>
</comment>
<comment type="pathway">
    <text evidence="1">Porphyrin-containing compound metabolism; protoheme biosynthesis; protoheme from protoporphyrin-IX: step 1/1.</text>
</comment>
<comment type="subcellular location">
    <subcellularLocation>
        <location evidence="1">Cytoplasm</location>
    </subcellularLocation>
</comment>
<comment type="similarity">
    <text evidence="1">Belongs to the ferrochelatase family.</text>
</comment>
<organism>
    <name type="scientific">Brucella anthropi (strain ATCC 49188 / DSM 6882 / CCUG 24695 / JCM 21032 / LMG 3331 / NBRC 15819 / NCTC 12168 / Alc 37)</name>
    <name type="common">Ochrobactrum anthropi</name>
    <dbReference type="NCBI Taxonomy" id="439375"/>
    <lineage>
        <taxon>Bacteria</taxon>
        <taxon>Pseudomonadati</taxon>
        <taxon>Pseudomonadota</taxon>
        <taxon>Alphaproteobacteria</taxon>
        <taxon>Hyphomicrobiales</taxon>
        <taxon>Brucellaceae</taxon>
        <taxon>Brucella/Ochrobactrum group</taxon>
        <taxon>Brucella</taxon>
    </lineage>
</organism>
<accession>A6X6W2</accession>
<keyword id="KW-0963">Cytoplasm</keyword>
<keyword id="KW-0350">Heme biosynthesis</keyword>
<keyword id="KW-0408">Iron</keyword>
<keyword id="KW-0456">Lyase</keyword>
<keyword id="KW-0479">Metal-binding</keyword>
<keyword id="KW-0627">Porphyrin biosynthesis</keyword>
<keyword id="KW-1185">Reference proteome</keyword>
<sequence length="350" mass="40051">MSEMDKVQEKPSQTTKTEVQAKLPKVGVLLVNLGTPDGTSYGPMRRYLAEFLSDRRVIEWPRLIWYPILYGIVLNTRPKRSGKLYDRIWNREKNESPLRTYTRAQGEKLATALADYPNVVVDWAMRYGQPSIESVTDRLLQQGCERIVMFPLYPQYSATTTATVNDKFFEALMKKRFQPAVRIVPSYETEPVYIEALARSIEKHLETLSFKPEVVLASYHGIPKSYSDKGDPYRQQCLETSRLLQARLGLDDSQFRSTFQSRFGPEEWLQPYTDETVEELAKHGVKSMAVLNPGFVADCLETVDEIGNEAAEEFLENGGESFSHIPCLNDSEDGMKVIETLVRRELQGWV</sequence>
<evidence type="ECO:0000255" key="1">
    <source>
        <dbReference type="HAMAP-Rule" id="MF_00323"/>
    </source>
</evidence>
<gene>
    <name evidence="1" type="primary">hemH</name>
    <name type="ordered locus">Oant_4266</name>
</gene>
<name>HEMH_BRUA4</name>
<proteinExistence type="inferred from homology"/>
<dbReference type="EC" id="4.98.1.1" evidence="1"/>
<dbReference type="EMBL" id="CP000759">
    <property type="protein sequence ID" value="ABS16966.1"/>
    <property type="molecule type" value="Genomic_DNA"/>
</dbReference>
<dbReference type="RefSeq" id="WP_012093558.1">
    <property type="nucleotide sequence ID" value="NC_009668.1"/>
</dbReference>
<dbReference type="SMR" id="A6X6W2"/>
<dbReference type="STRING" id="439375.Oant_4266"/>
<dbReference type="KEGG" id="oan:Oant_4266"/>
<dbReference type="PATRIC" id="fig|439375.7.peg.4439"/>
<dbReference type="eggNOG" id="COG0276">
    <property type="taxonomic scope" value="Bacteria"/>
</dbReference>
<dbReference type="HOGENOM" id="CLU_018884_0_0_5"/>
<dbReference type="UniPathway" id="UPA00252">
    <property type="reaction ID" value="UER00325"/>
</dbReference>
<dbReference type="Proteomes" id="UP000002301">
    <property type="component" value="Chromosome 2"/>
</dbReference>
<dbReference type="GO" id="GO:0005737">
    <property type="term" value="C:cytoplasm"/>
    <property type="evidence" value="ECO:0007669"/>
    <property type="project" value="UniProtKB-SubCell"/>
</dbReference>
<dbReference type="GO" id="GO:0004325">
    <property type="term" value="F:ferrochelatase activity"/>
    <property type="evidence" value="ECO:0007669"/>
    <property type="project" value="UniProtKB-UniRule"/>
</dbReference>
<dbReference type="GO" id="GO:0046872">
    <property type="term" value="F:metal ion binding"/>
    <property type="evidence" value="ECO:0007669"/>
    <property type="project" value="UniProtKB-KW"/>
</dbReference>
<dbReference type="GO" id="GO:0006783">
    <property type="term" value="P:heme biosynthetic process"/>
    <property type="evidence" value="ECO:0007669"/>
    <property type="project" value="UniProtKB-UniRule"/>
</dbReference>
<dbReference type="CDD" id="cd00419">
    <property type="entry name" value="Ferrochelatase_C"/>
    <property type="match status" value="1"/>
</dbReference>
<dbReference type="CDD" id="cd03411">
    <property type="entry name" value="Ferrochelatase_N"/>
    <property type="match status" value="1"/>
</dbReference>
<dbReference type="FunFam" id="3.40.50.1400:FF:000002">
    <property type="entry name" value="Ferrochelatase"/>
    <property type="match status" value="1"/>
</dbReference>
<dbReference type="Gene3D" id="3.40.50.1400">
    <property type="match status" value="2"/>
</dbReference>
<dbReference type="HAMAP" id="MF_00323">
    <property type="entry name" value="Ferrochelatase"/>
    <property type="match status" value="1"/>
</dbReference>
<dbReference type="InterPro" id="IPR001015">
    <property type="entry name" value="Ferrochelatase"/>
</dbReference>
<dbReference type="InterPro" id="IPR019772">
    <property type="entry name" value="Ferrochelatase_AS"/>
</dbReference>
<dbReference type="InterPro" id="IPR033644">
    <property type="entry name" value="Ferrochelatase_C"/>
</dbReference>
<dbReference type="InterPro" id="IPR033659">
    <property type="entry name" value="Ferrochelatase_N"/>
</dbReference>
<dbReference type="NCBIfam" id="TIGR00109">
    <property type="entry name" value="hemH"/>
    <property type="match status" value="1"/>
</dbReference>
<dbReference type="PANTHER" id="PTHR11108">
    <property type="entry name" value="FERROCHELATASE"/>
    <property type="match status" value="1"/>
</dbReference>
<dbReference type="PANTHER" id="PTHR11108:SF1">
    <property type="entry name" value="FERROCHELATASE, MITOCHONDRIAL"/>
    <property type="match status" value="1"/>
</dbReference>
<dbReference type="Pfam" id="PF00762">
    <property type="entry name" value="Ferrochelatase"/>
    <property type="match status" value="1"/>
</dbReference>
<dbReference type="SUPFAM" id="SSF53800">
    <property type="entry name" value="Chelatase"/>
    <property type="match status" value="1"/>
</dbReference>
<dbReference type="PROSITE" id="PS00534">
    <property type="entry name" value="FERROCHELATASE"/>
    <property type="match status" value="1"/>
</dbReference>